<name>CYSG1_SERP5</name>
<evidence type="ECO:0000255" key="1">
    <source>
        <dbReference type="HAMAP-Rule" id="MF_01646"/>
    </source>
</evidence>
<proteinExistence type="inferred from homology"/>
<keyword id="KW-0169">Cobalamin biosynthesis</keyword>
<keyword id="KW-0456">Lyase</keyword>
<keyword id="KW-0489">Methyltransferase</keyword>
<keyword id="KW-0511">Multifunctional enzyme</keyword>
<keyword id="KW-0520">NAD</keyword>
<keyword id="KW-0560">Oxidoreductase</keyword>
<keyword id="KW-0597">Phosphoprotein</keyword>
<keyword id="KW-0627">Porphyrin biosynthesis</keyword>
<keyword id="KW-0949">S-adenosyl-L-methionine</keyword>
<keyword id="KW-0808">Transferase</keyword>
<sequence length="476" mass="51267">MDYLPIFADLKQRPVLVVGGGEVAARKVDLLLRAGAEIRIVAQSLSPILEQLSQQGQIHWLGQAFAAEQLDEVFLVIAATDDSALNAEVFSEADKRRVLANVVDDQPRCSFIFPSIIDRSPLVVAVSSSGQAPVLARMLREKLEALLPASLGQMAEVAGRWRGQVKQRLNAIGERRRFWEKTFGGRFATLVANGQTAEAQRQLEQDLEQFAQGSEGTQGEIALVGAGPGDVGLLTLRGLQVMQQADVVLYDHLVSDEILDLVRRDAERICVGKRAGAHSVIQEETNRLLVELAQQGKRVVRLKGGDPFIFGRGGEELQVAAAAGIPFQVVPGVTAAAGATAYAGIPLTHRDHAQSVTFITGHCRPDGDGLDWADLARARQTLAIYMGTMKAADISQRLIAHGRAATTPVAVISRGTRADQLVQTGTLQQLEQLAQQAPLPALLVIGEVVELHHQIAWFGHQPQAEGVSRPAVVNLA</sequence>
<gene>
    <name evidence="1" type="primary">cysG1</name>
    <name type="ordered locus">Spro_0817</name>
</gene>
<feature type="chain" id="PRO_0000330557" description="Siroheme synthase 1">
    <location>
        <begin position="1"/>
        <end position="476"/>
    </location>
</feature>
<feature type="region of interest" description="Precorrin-2 dehydrogenase /sirohydrochlorin ferrochelatase" evidence="1">
    <location>
        <begin position="1"/>
        <end position="203"/>
    </location>
</feature>
<feature type="region of interest" description="Uroporphyrinogen-III C-methyltransferase" evidence="1">
    <location>
        <begin position="219"/>
        <end position="476"/>
    </location>
</feature>
<feature type="active site" description="Proton acceptor" evidence="1">
    <location>
        <position position="251"/>
    </location>
</feature>
<feature type="active site" description="Proton donor" evidence="1">
    <location>
        <position position="273"/>
    </location>
</feature>
<feature type="binding site" evidence="1">
    <location>
        <begin position="22"/>
        <end position="23"/>
    </location>
    <ligand>
        <name>NAD(+)</name>
        <dbReference type="ChEBI" id="CHEBI:57540"/>
    </ligand>
</feature>
<feature type="binding site" evidence="1">
    <location>
        <begin position="43"/>
        <end position="44"/>
    </location>
    <ligand>
        <name>NAD(+)</name>
        <dbReference type="ChEBI" id="CHEBI:57540"/>
    </ligand>
</feature>
<feature type="binding site" evidence="1">
    <location>
        <position position="228"/>
    </location>
    <ligand>
        <name>S-adenosyl-L-methionine</name>
        <dbReference type="ChEBI" id="CHEBI:59789"/>
    </ligand>
</feature>
<feature type="binding site" evidence="1">
    <location>
        <begin position="304"/>
        <end position="306"/>
    </location>
    <ligand>
        <name>S-adenosyl-L-methionine</name>
        <dbReference type="ChEBI" id="CHEBI:59789"/>
    </ligand>
</feature>
<feature type="binding site" evidence="1">
    <location>
        <position position="309"/>
    </location>
    <ligand>
        <name>S-adenosyl-L-methionine</name>
        <dbReference type="ChEBI" id="CHEBI:59789"/>
    </ligand>
</feature>
<feature type="binding site" evidence="1">
    <location>
        <begin position="334"/>
        <end position="335"/>
    </location>
    <ligand>
        <name>S-adenosyl-L-methionine</name>
        <dbReference type="ChEBI" id="CHEBI:59789"/>
    </ligand>
</feature>
<feature type="binding site" evidence="1">
    <location>
        <position position="386"/>
    </location>
    <ligand>
        <name>S-adenosyl-L-methionine</name>
        <dbReference type="ChEBI" id="CHEBI:59789"/>
    </ligand>
</feature>
<feature type="binding site" evidence="1">
    <location>
        <position position="415"/>
    </location>
    <ligand>
        <name>S-adenosyl-L-methionine</name>
        <dbReference type="ChEBI" id="CHEBI:59789"/>
    </ligand>
</feature>
<feature type="modified residue" description="Phosphoserine" evidence="1">
    <location>
        <position position="128"/>
    </location>
</feature>
<organism>
    <name type="scientific">Serratia proteamaculans (strain 568)</name>
    <dbReference type="NCBI Taxonomy" id="399741"/>
    <lineage>
        <taxon>Bacteria</taxon>
        <taxon>Pseudomonadati</taxon>
        <taxon>Pseudomonadota</taxon>
        <taxon>Gammaproteobacteria</taxon>
        <taxon>Enterobacterales</taxon>
        <taxon>Yersiniaceae</taxon>
        <taxon>Serratia</taxon>
    </lineage>
</organism>
<dbReference type="EC" id="2.1.1.107" evidence="1"/>
<dbReference type="EC" id="1.3.1.76" evidence="1"/>
<dbReference type="EC" id="4.99.1.4" evidence="1"/>
<dbReference type="EMBL" id="CP000826">
    <property type="protein sequence ID" value="ABV39923.1"/>
    <property type="molecule type" value="Genomic_DNA"/>
</dbReference>
<dbReference type="SMR" id="A8G9Y3"/>
<dbReference type="STRING" id="399741.Spro_0817"/>
<dbReference type="KEGG" id="spe:Spro_0817"/>
<dbReference type="eggNOG" id="COG0007">
    <property type="taxonomic scope" value="Bacteria"/>
</dbReference>
<dbReference type="eggNOG" id="COG1648">
    <property type="taxonomic scope" value="Bacteria"/>
</dbReference>
<dbReference type="HOGENOM" id="CLU_011276_2_0_6"/>
<dbReference type="OrthoDB" id="9815856at2"/>
<dbReference type="UniPathway" id="UPA00148">
    <property type="reaction ID" value="UER00211"/>
</dbReference>
<dbReference type="UniPathway" id="UPA00148">
    <property type="reaction ID" value="UER00222"/>
</dbReference>
<dbReference type="UniPathway" id="UPA00262">
    <property type="reaction ID" value="UER00211"/>
</dbReference>
<dbReference type="UniPathway" id="UPA00262">
    <property type="reaction ID" value="UER00222"/>
</dbReference>
<dbReference type="UniPathway" id="UPA00262">
    <property type="reaction ID" value="UER00376"/>
</dbReference>
<dbReference type="GO" id="GO:0051287">
    <property type="term" value="F:NAD binding"/>
    <property type="evidence" value="ECO:0007669"/>
    <property type="project" value="InterPro"/>
</dbReference>
<dbReference type="GO" id="GO:0043115">
    <property type="term" value="F:precorrin-2 dehydrogenase activity"/>
    <property type="evidence" value="ECO:0007669"/>
    <property type="project" value="UniProtKB-UniRule"/>
</dbReference>
<dbReference type="GO" id="GO:0051266">
    <property type="term" value="F:sirohydrochlorin ferrochelatase activity"/>
    <property type="evidence" value="ECO:0007669"/>
    <property type="project" value="UniProtKB-EC"/>
</dbReference>
<dbReference type="GO" id="GO:0004851">
    <property type="term" value="F:uroporphyrin-III C-methyltransferase activity"/>
    <property type="evidence" value="ECO:0007669"/>
    <property type="project" value="UniProtKB-UniRule"/>
</dbReference>
<dbReference type="GO" id="GO:0009236">
    <property type="term" value="P:cobalamin biosynthetic process"/>
    <property type="evidence" value="ECO:0007669"/>
    <property type="project" value="UniProtKB-UniRule"/>
</dbReference>
<dbReference type="GO" id="GO:0032259">
    <property type="term" value="P:methylation"/>
    <property type="evidence" value="ECO:0007669"/>
    <property type="project" value="UniProtKB-KW"/>
</dbReference>
<dbReference type="GO" id="GO:0019354">
    <property type="term" value="P:siroheme biosynthetic process"/>
    <property type="evidence" value="ECO:0007669"/>
    <property type="project" value="UniProtKB-UniRule"/>
</dbReference>
<dbReference type="CDD" id="cd11642">
    <property type="entry name" value="SUMT"/>
    <property type="match status" value="1"/>
</dbReference>
<dbReference type="FunFam" id="3.30.160.110:FF:000001">
    <property type="entry name" value="Siroheme synthase"/>
    <property type="match status" value="1"/>
</dbReference>
<dbReference type="FunFam" id="3.30.950.10:FF:000001">
    <property type="entry name" value="Siroheme synthase"/>
    <property type="match status" value="1"/>
</dbReference>
<dbReference type="FunFam" id="3.40.1010.10:FF:000001">
    <property type="entry name" value="Siroheme synthase"/>
    <property type="match status" value="1"/>
</dbReference>
<dbReference type="Gene3D" id="3.40.1010.10">
    <property type="entry name" value="Cobalt-precorrin-4 Transmethylase, Domain 1"/>
    <property type="match status" value="1"/>
</dbReference>
<dbReference type="Gene3D" id="3.30.950.10">
    <property type="entry name" value="Methyltransferase, Cobalt-precorrin-4 Transmethylase, Domain 2"/>
    <property type="match status" value="1"/>
</dbReference>
<dbReference type="Gene3D" id="3.40.50.720">
    <property type="entry name" value="NAD(P)-binding Rossmann-like Domain"/>
    <property type="match status" value="1"/>
</dbReference>
<dbReference type="Gene3D" id="1.10.8.210">
    <property type="entry name" value="Sirohaem synthase, dimerisation domain"/>
    <property type="match status" value="1"/>
</dbReference>
<dbReference type="Gene3D" id="3.30.160.110">
    <property type="entry name" value="Siroheme synthase, domain 2"/>
    <property type="match status" value="1"/>
</dbReference>
<dbReference type="HAMAP" id="MF_01646">
    <property type="entry name" value="Siroheme_synth"/>
    <property type="match status" value="1"/>
</dbReference>
<dbReference type="InterPro" id="IPR000878">
    <property type="entry name" value="4pyrrol_Mease"/>
</dbReference>
<dbReference type="InterPro" id="IPR035996">
    <property type="entry name" value="4pyrrol_Methylase_sf"/>
</dbReference>
<dbReference type="InterPro" id="IPR014777">
    <property type="entry name" value="4pyrrole_Mease_sub1"/>
</dbReference>
<dbReference type="InterPro" id="IPR014776">
    <property type="entry name" value="4pyrrole_Mease_sub2"/>
</dbReference>
<dbReference type="InterPro" id="IPR006366">
    <property type="entry name" value="CobA/CysG_C"/>
</dbReference>
<dbReference type="InterPro" id="IPR036291">
    <property type="entry name" value="NAD(P)-bd_dom_sf"/>
</dbReference>
<dbReference type="InterPro" id="IPR050161">
    <property type="entry name" value="Siro_Cobalamin_biosynth"/>
</dbReference>
<dbReference type="InterPro" id="IPR037115">
    <property type="entry name" value="Sirohaem_synt_dimer_dom_sf"/>
</dbReference>
<dbReference type="InterPro" id="IPR012409">
    <property type="entry name" value="Sirohaem_synth"/>
</dbReference>
<dbReference type="InterPro" id="IPR028281">
    <property type="entry name" value="Sirohaem_synthase_central"/>
</dbReference>
<dbReference type="InterPro" id="IPR019478">
    <property type="entry name" value="Sirohaem_synthase_dimer_dom"/>
</dbReference>
<dbReference type="InterPro" id="IPR006367">
    <property type="entry name" value="Sirohaem_synthase_N"/>
</dbReference>
<dbReference type="InterPro" id="IPR003043">
    <property type="entry name" value="Uropor_MeTrfase_CS"/>
</dbReference>
<dbReference type="NCBIfam" id="TIGR01469">
    <property type="entry name" value="cobA_cysG_Cterm"/>
    <property type="match status" value="1"/>
</dbReference>
<dbReference type="NCBIfam" id="TIGR01470">
    <property type="entry name" value="cysG_Nterm"/>
    <property type="match status" value="1"/>
</dbReference>
<dbReference type="NCBIfam" id="NF004790">
    <property type="entry name" value="PRK06136.1"/>
    <property type="match status" value="1"/>
</dbReference>
<dbReference type="NCBIfam" id="NF007922">
    <property type="entry name" value="PRK10637.1"/>
    <property type="match status" value="1"/>
</dbReference>
<dbReference type="PANTHER" id="PTHR45790:SF1">
    <property type="entry name" value="SIROHEME SYNTHASE"/>
    <property type="match status" value="1"/>
</dbReference>
<dbReference type="PANTHER" id="PTHR45790">
    <property type="entry name" value="SIROHEME SYNTHASE-RELATED"/>
    <property type="match status" value="1"/>
</dbReference>
<dbReference type="Pfam" id="PF10414">
    <property type="entry name" value="CysG_dimeriser"/>
    <property type="match status" value="1"/>
</dbReference>
<dbReference type="Pfam" id="PF13241">
    <property type="entry name" value="NAD_binding_7"/>
    <property type="match status" value="1"/>
</dbReference>
<dbReference type="Pfam" id="PF14824">
    <property type="entry name" value="Sirohm_synth_M"/>
    <property type="match status" value="1"/>
</dbReference>
<dbReference type="Pfam" id="PF00590">
    <property type="entry name" value="TP_methylase"/>
    <property type="match status" value="1"/>
</dbReference>
<dbReference type="PIRSF" id="PIRSF036426">
    <property type="entry name" value="Sirohaem_synth"/>
    <property type="match status" value="1"/>
</dbReference>
<dbReference type="SUPFAM" id="SSF51735">
    <property type="entry name" value="NAD(P)-binding Rossmann-fold domains"/>
    <property type="match status" value="1"/>
</dbReference>
<dbReference type="SUPFAM" id="SSF75615">
    <property type="entry name" value="Siroheme synthase middle domains-like"/>
    <property type="match status" value="1"/>
</dbReference>
<dbReference type="SUPFAM" id="SSF53790">
    <property type="entry name" value="Tetrapyrrole methylase"/>
    <property type="match status" value="1"/>
</dbReference>
<dbReference type="PROSITE" id="PS00839">
    <property type="entry name" value="SUMT_1"/>
    <property type="match status" value="1"/>
</dbReference>
<dbReference type="PROSITE" id="PS00840">
    <property type="entry name" value="SUMT_2"/>
    <property type="match status" value="1"/>
</dbReference>
<protein>
    <recommendedName>
        <fullName evidence="1">Siroheme synthase 1</fullName>
    </recommendedName>
    <domain>
        <recommendedName>
            <fullName evidence="1">Uroporphyrinogen-III C-methyltransferase 1</fullName>
            <shortName evidence="1">Urogen III methylase 1</shortName>
            <ecNumber evidence="1">2.1.1.107</ecNumber>
        </recommendedName>
        <alternativeName>
            <fullName evidence="1">SUMT 1</fullName>
        </alternativeName>
        <alternativeName>
            <fullName evidence="1">Uroporphyrinogen III methylase 1</fullName>
            <shortName evidence="1">UROM 1</shortName>
        </alternativeName>
    </domain>
    <domain>
        <recommendedName>
            <fullName evidence="1">Precorrin-2 dehydrogenase 1</fullName>
            <ecNumber evidence="1">1.3.1.76</ecNumber>
        </recommendedName>
    </domain>
    <domain>
        <recommendedName>
            <fullName evidence="1">Sirohydrochlorin ferrochelatase 1</fullName>
            <ecNumber evidence="1">4.99.1.4</ecNumber>
        </recommendedName>
    </domain>
</protein>
<comment type="function">
    <text evidence="1">Multifunctional enzyme that catalyzes the SAM-dependent methylations of uroporphyrinogen III at position C-2 and C-7 to form precorrin-2 via precorrin-1. Then it catalyzes the NAD-dependent ring dehydrogenation of precorrin-2 to yield sirohydrochlorin. Finally, it catalyzes the ferrochelation of sirohydrochlorin to yield siroheme.</text>
</comment>
<comment type="catalytic activity">
    <reaction evidence="1">
        <text>uroporphyrinogen III + 2 S-adenosyl-L-methionine = precorrin-2 + 2 S-adenosyl-L-homocysteine + H(+)</text>
        <dbReference type="Rhea" id="RHEA:32459"/>
        <dbReference type="ChEBI" id="CHEBI:15378"/>
        <dbReference type="ChEBI" id="CHEBI:57308"/>
        <dbReference type="ChEBI" id="CHEBI:57856"/>
        <dbReference type="ChEBI" id="CHEBI:58827"/>
        <dbReference type="ChEBI" id="CHEBI:59789"/>
        <dbReference type="EC" id="2.1.1.107"/>
    </reaction>
</comment>
<comment type="catalytic activity">
    <reaction evidence="1">
        <text>precorrin-2 + NAD(+) = sirohydrochlorin + NADH + 2 H(+)</text>
        <dbReference type="Rhea" id="RHEA:15613"/>
        <dbReference type="ChEBI" id="CHEBI:15378"/>
        <dbReference type="ChEBI" id="CHEBI:57540"/>
        <dbReference type="ChEBI" id="CHEBI:57945"/>
        <dbReference type="ChEBI" id="CHEBI:58351"/>
        <dbReference type="ChEBI" id="CHEBI:58827"/>
        <dbReference type="EC" id="1.3.1.76"/>
    </reaction>
</comment>
<comment type="catalytic activity">
    <reaction evidence="1">
        <text>siroheme + 2 H(+) = sirohydrochlorin + Fe(2+)</text>
        <dbReference type="Rhea" id="RHEA:24360"/>
        <dbReference type="ChEBI" id="CHEBI:15378"/>
        <dbReference type="ChEBI" id="CHEBI:29033"/>
        <dbReference type="ChEBI" id="CHEBI:58351"/>
        <dbReference type="ChEBI" id="CHEBI:60052"/>
        <dbReference type="EC" id="4.99.1.4"/>
    </reaction>
</comment>
<comment type="pathway">
    <text evidence="1">Cofactor biosynthesis; adenosylcobalamin biosynthesis; precorrin-2 from uroporphyrinogen III: step 1/1.</text>
</comment>
<comment type="pathway">
    <text evidence="1">Cofactor biosynthesis; adenosylcobalamin biosynthesis; sirohydrochlorin from precorrin-2: step 1/1.</text>
</comment>
<comment type="pathway">
    <text evidence="1">Porphyrin-containing compound metabolism; siroheme biosynthesis; precorrin-2 from uroporphyrinogen III: step 1/1.</text>
</comment>
<comment type="pathway">
    <text evidence="1">Porphyrin-containing compound metabolism; siroheme biosynthesis; siroheme from sirohydrochlorin: step 1/1.</text>
</comment>
<comment type="pathway">
    <text evidence="1">Porphyrin-containing compound metabolism; siroheme biosynthesis; sirohydrochlorin from precorrin-2: step 1/1.</text>
</comment>
<comment type="similarity">
    <text evidence="1">In the N-terminal section; belongs to the precorrin-2 dehydrogenase / sirohydrochlorin ferrochelatase family.</text>
</comment>
<comment type="similarity">
    <text evidence="1">In the C-terminal section; belongs to the precorrin methyltransferase family.</text>
</comment>
<reference key="1">
    <citation type="submission" date="2007-09" db="EMBL/GenBank/DDBJ databases">
        <title>Complete sequence of chromosome of Serratia proteamaculans 568.</title>
        <authorList>
            <consortium name="US DOE Joint Genome Institute"/>
            <person name="Copeland A."/>
            <person name="Lucas S."/>
            <person name="Lapidus A."/>
            <person name="Barry K."/>
            <person name="Glavina del Rio T."/>
            <person name="Dalin E."/>
            <person name="Tice H."/>
            <person name="Pitluck S."/>
            <person name="Chain P."/>
            <person name="Malfatti S."/>
            <person name="Shin M."/>
            <person name="Vergez L."/>
            <person name="Schmutz J."/>
            <person name="Larimer F."/>
            <person name="Land M."/>
            <person name="Hauser L."/>
            <person name="Kyrpides N."/>
            <person name="Kim E."/>
            <person name="Taghavi S."/>
            <person name="Newman L."/>
            <person name="Vangronsveld J."/>
            <person name="van der Lelie D."/>
            <person name="Richardson P."/>
        </authorList>
    </citation>
    <scope>NUCLEOTIDE SEQUENCE [LARGE SCALE GENOMIC DNA]</scope>
    <source>
        <strain>568</strain>
    </source>
</reference>
<accession>A8G9Y3</accession>